<protein>
    <recommendedName>
        <fullName evidence="6">Spermatocyte protein spe-8</fullName>
        <ecNumber>2.7.10.2</ecNumber>
    </recommendedName>
    <alternativeName>
        <fullName evidence="9">Defective spermatogenesis protein spe-8</fullName>
    </alternativeName>
</protein>
<sequence length="519" mass="58700">MSGVELQPESTQSEEKEEPKTAATTISSTEETKTENPNVALDNLAKTPIQLILQPTPQTPAKTPETPRIQKINNLKKSASFDSKNQPEDSKTPKQRDQLIEVPSDEVGRVENNIDNLPFYHGFMGRTECESMLSNHGDFLIRMTEVGRRVAYVISVRWHYQNSHVLVKRTKTKKLYWTKKYAFKSICELIAYHKLNQIPFYDNMTLICGLARHEWQLNNEQVTLNKKLGEGQFGEVHKGKLKTSVFTPPVIVAVKTLHQNHLSANEKILFLKEANVMLTLAHPNVIKFYGVCTMKEPIMIVMEFCDGSSLEDVLLSKESKVSSEDKILYLFHAACGIDYLHGKHVIHRDIAARNCLLNSKKVLKISDFGLSVKGVAIKERKGGCLPVKYMAPETLKKGFYSTASDIYSYGALVYEVYTDGKTPFESCGLRGNELRKAIIGKSVILTIDVECPEFVKAIFEQSRLYDTEQRISSKRIIEIFKEEAGMHELDATGLFGRIGSFFSRVRRQKEAEPSVPILT</sequence>
<proteinExistence type="evidence at transcript level"/>
<dbReference type="EC" id="2.7.10.2"/>
<dbReference type="EMBL" id="HE600988">
    <property type="protein sequence ID" value="CAP25702.2"/>
    <property type="molecule type" value="Genomic_DNA"/>
</dbReference>
<dbReference type="SMR" id="A8WZ92"/>
<dbReference type="FunCoup" id="A8WZ92">
    <property type="interactions" value="13"/>
</dbReference>
<dbReference type="STRING" id="6238.A8WZ92"/>
<dbReference type="WormBase" id="CBG05099a">
    <property type="protein sequence ID" value="CBP31785"/>
    <property type="gene ID" value="WBGene00027634"/>
    <property type="gene designation" value="Cbr-spe-8"/>
</dbReference>
<dbReference type="eggNOG" id="KOG0194">
    <property type="taxonomic scope" value="Eukaryota"/>
</dbReference>
<dbReference type="HOGENOM" id="CLU_000288_7_2_1"/>
<dbReference type="InParanoid" id="A8WZ92"/>
<dbReference type="OMA" id="CLPVKYM"/>
<dbReference type="Proteomes" id="UP000008549">
    <property type="component" value="Unassembled WGS sequence"/>
</dbReference>
<dbReference type="GO" id="GO:0005737">
    <property type="term" value="C:cytoplasm"/>
    <property type="evidence" value="ECO:0007669"/>
    <property type="project" value="UniProtKB-SubCell"/>
</dbReference>
<dbReference type="GO" id="GO:0005886">
    <property type="term" value="C:plasma membrane"/>
    <property type="evidence" value="ECO:0000318"/>
    <property type="project" value="GO_Central"/>
</dbReference>
<dbReference type="GO" id="GO:0005524">
    <property type="term" value="F:ATP binding"/>
    <property type="evidence" value="ECO:0007669"/>
    <property type="project" value="UniProtKB-KW"/>
</dbReference>
<dbReference type="GO" id="GO:0004715">
    <property type="term" value="F:non-membrane spanning protein tyrosine kinase activity"/>
    <property type="evidence" value="ECO:0000318"/>
    <property type="project" value="GO_Central"/>
</dbReference>
<dbReference type="GO" id="GO:0005102">
    <property type="term" value="F:signaling receptor binding"/>
    <property type="evidence" value="ECO:0000318"/>
    <property type="project" value="GO_Central"/>
</dbReference>
<dbReference type="GO" id="GO:0030154">
    <property type="term" value="P:cell differentiation"/>
    <property type="evidence" value="ECO:0000318"/>
    <property type="project" value="GO_Central"/>
</dbReference>
<dbReference type="GO" id="GO:0007169">
    <property type="term" value="P:cell surface receptor protein tyrosine kinase signaling pathway"/>
    <property type="evidence" value="ECO:0000318"/>
    <property type="project" value="GO_Central"/>
</dbReference>
<dbReference type="GO" id="GO:0007283">
    <property type="term" value="P:spermatogenesis"/>
    <property type="evidence" value="ECO:0007669"/>
    <property type="project" value="UniProtKB-KW"/>
</dbReference>
<dbReference type="CDD" id="cd10361">
    <property type="entry name" value="SH2_Fps_family"/>
    <property type="match status" value="1"/>
</dbReference>
<dbReference type="FunFam" id="3.30.505.10:FF:000130">
    <property type="entry name" value="Spermatocyte protein spe-8"/>
    <property type="match status" value="1"/>
</dbReference>
<dbReference type="FunFam" id="1.10.510.10:FF:001388">
    <property type="entry name" value="Tyrosine-protein kinase"/>
    <property type="match status" value="1"/>
</dbReference>
<dbReference type="Gene3D" id="3.30.200.20">
    <property type="entry name" value="Phosphorylase Kinase, domain 1"/>
    <property type="match status" value="2"/>
</dbReference>
<dbReference type="Gene3D" id="3.30.505.10">
    <property type="entry name" value="SH2 domain"/>
    <property type="match status" value="1"/>
</dbReference>
<dbReference type="Gene3D" id="1.10.510.10">
    <property type="entry name" value="Transferase(Phosphotransferase) domain 1"/>
    <property type="match status" value="1"/>
</dbReference>
<dbReference type="InterPro" id="IPR035849">
    <property type="entry name" value="Fes/Fps/Fer_SH2"/>
</dbReference>
<dbReference type="InterPro" id="IPR011009">
    <property type="entry name" value="Kinase-like_dom_sf"/>
</dbReference>
<dbReference type="InterPro" id="IPR050198">
    <property type="entry name" value="Non-receptor_tyrosine_kinases"/>
</dbReference>
<dbReference type="InterPro" id="IPR000719">
    <property type="entry name" value="Prot_kinase_dom"/>
</dbReference>
<dbReference type="InterPro" id="IPR001245">
    <property type="entry name" value="Ser-Thr/Tyr_kinase_cat_dom"/>
</dbReference>
<dbReference type="InterPro" id="IPR000980">
    <property type="entry name" value="SH2"/>
</dbReference>
<dbReference type="InterPro" id="IPR036860">
    <property type="entry name" value="SH2_dom_sf"/>
</dbReference>
<dbReference type="InterPro" id="IPR008266">
    <property type="entry name" value="Tyr_kinase_AS"/>
</dbReference>
<dbReference type="InterPro" id="IPR020635">
    <property type="entry name" value="Tyr_kinase_cat_dom"/>
</dbReference>
<dbReference type="PANTHER" id="PTHR24418">
    <property type="entry name" value="TYROSINE-PROTEIN KINASE"/>
    <property type="match status" value="1"/>
</dbReference>
<dbReference type="Pfam" id="PF07714">
    <property type="entry name" value="PK_Tyr_Ser-Thr"/>
    <property type="match status" value="1"/>
</dbReference>
<dbReference type="Pfam" id="PF00017">
    <property type="entry name" value="SH2"/>
    <property type="match status" value="1"/>
</dbReference>
<dbReference type="PRINTS" id="PR00109">
    <property type="entry name" value="TYRKINASE"/>
</dbReference>
<dbReference type="SMART" id="SM00252">
    <property type="entry name" value="SH2"/>
    <property type="match status" value="1"/>
</dbReference>
<dbReference type="SMART" id="SM00219">
    <property type="entry name" value="TyrKc"/>
    <property type="match status" value="1"/>
</dbReference>
<dbReference type="SUPFAM" id="SSF56112">
    <property type="entry name" value="Protein kinase-like (PK-like)"/>
    <property type="match status" value="1"/>
</dbReference>
<dbReference type="SUPFAM" id="SSF55550">
    <property type="entry name" value="SH2 domain"/>
    <property type="match status" value="1"/>
</dbReference>
<dbReference type="PROSITE" id="PS50011">
    <property type="entry name" value="PROTEIN_KINASE_DOM"/>
    <property type="match status" value="1"/>
</dbReference>
<dbReference type="PROSITE" id="PS00109">
    <property type="entry name" value="PROTEIN_KINASE_TYR"/>
    <property type="match status" value="1"/>
</dbReference>
<dbReference type="PROSITE" id="PS50001">
    <property type="entry name" value="SH2"/>
    <property type="match status" value="1"/>
</dbReference>
<feature type="chain" id="PRO_0000433987" description="Spermatocyte protein spe-8" evidence="6">
    <location>
        <begin position="1"/>
        <end position="519"/>
    </location>
</feature>
<feature type="domain" description="SH2" evidence="3">
    <location>
        <begin position="119"/>
        <end position="208"/>
    </location>
</feature>
<feature type="domain" description="Protein kinase" evidence="2">
    <location>
        <begin position="209"/>
        <end position="490"/>
    </location>
</feature>
<feature type="region of interest" description="Disordered" evidence="4">
    <location>
        <begin position="1"/>
        <end position="39"/>
    </location>
</feature>
<feature type="region of interest" description="Disordered" evidence="4">
    <location>
        <begin position="73"/>
        <end position="97"/>
    </location>
</feature>
<feature type="compositionally biased region" description="Polar residues" evidence="4">
    <location>
        <begin position="73"/>
        <end position="84"/>
    </location>
</feature>
<feature type="compositionally biased region" description="Basic and acidic residues" evidence="4">
    <location>
        <begin position="85"/>
        <end position="97"/>
    </location>
</feature>
<feature type="active site" description="Proton acceptor" evidence="2">
    <location>
        <position position="349"/>
    </location>
</feature>
<feature type="binding site" evidence="2">
    <location>
        <begin position="146"/>
        <end position="154"/>
    </location>
    <ligand>
        <name>ATP</name>
        <dbReference type="ChEBI" id="CHEBI:30616"/>
    </ligand>
</feature>
<feature type="binding site" evidence="2">
    <location>
        <position position="184"/>
    </location>
    <ligand>
        <name>ATP</name>
        <dbReference type="ChEBI" id="CHEBI:30616"/>
    </ligand>
</feature>
<comment type="function">
    <text evidence="5">Probable non-receptor tyrosine-protein kinase which plays a role in spermatid activation (spermiogenesis) in hermaphrodites.</text>
</comment>
<comment type="catalytic activity">
    <reaction>
        <text>L-tyrosyl-[protein] + ATP = O-phospho-L-tyrosyl-[protein] + ADP + H(+)</text>
        <dbReference type="Rhea" id="RHEA:10596"/>
        <dbReference type="Rhea" id="RHEA-COMP:10136"/>
        <dbReference type="Rhea" id="RHEA-COMP:20101"/>
        <dbReference type="ChEBI" id="CHEBI:15378"/>
        <dbReference type="ChEBI" id="CHEBI:30616"/>
        <dbReference type="ChEBI" id="CHEBI:46858"/>
        <dbReference type="ChEBI" id="CHEBI:61978"/>
        <dbReference type="ChEBI" id="CHEBI:456216"/>
        <dbReference type="EC" id="2.7.10.2"/>
    </reaction>
</comment>
<comment type="subcellular location">
    <subcellularLocation>
        <location>Cell membrane</location>
        <topology>Peripheral membrane protein</topology>
    </subcellularLocation>
    <subcellularLocation>
        <location>Cytoplasm</location>
    </subcellularLocation>
    <text evidence="1">Localizes mainly in the cytoplasm in stage I spermatocytes and at the cell membrane in stage II spermatocytes and in spermatids.</text>
</comment>
<comment type="tissue specificity">
    <text evidence="5">Expressed in hermaphrodite larvae but not in adult. Expressed in both male larvae and adult.</text>
</comment>
<comment type="similarity">
    <text evidence="6">Belongs to the protein kinase superfamily. Tyr protein kinase family. Fes/fps subfamily.</text>
</comment>
<accession>A8WZ92</accession>
<name>SPE8_CAEBR</name>
<gene>
    <name evidence="9" type="primary">spe-8</name>
    <name evidence="9" type="ORF">CBG05099</name>
</gene>
<keyword id="KW-0067">ATP-binding</keyword>
<keyword id="KW-1003">Cell membrane</keyword>
<keyword id="KW-0963">Cytoplasm</keyword>
<keyword id="KW-0221">Differentiation</keyword>
<keyword id="KW-0418">Kinase</keyword>
<keyword id="KW-0472">Membrane</keyword>
<keyword id="KW-0547">Nucleotide-binding</keyword>
<keyword id="KW-1185">Reference proteome</keyword>
<keyword id="KW-0727">SH2 domain</keyword>
<keyword id="KW-0744">Spermatogenesis</keyword>
<keyword id="KW-0808">Transferase</keyword>
<keyword id="KW-0829">Tyrosine-protein kinase</keyword>
<organism evidence="8">
    <name type="scientific">Caenorhabditis briggsae</name>
    <dbReference type="NCBI Taxonomy" id="6238"/>
    <lineage>
        <taxon>Eukaryota</taxon>
        <taxon>Metazoa</taxon>
        <taxon>Ecdysozoa</taxon>
        <taxon>Nematoda</taxon>
        <taxon>Chromadorea</taxon>
        <taxon>Rhabditida</taxon>
        <taxon>Rhabditina</taxon>
        <taxon>Rhabditomorpha</taxon>
        <taxon>Rhabditoidea</taxon>
        <taxon>Rhabditidae</taxon>
        <taxon>Peloderinae</taxon>
        <taxon>Caenorhabditis</taxon>
    </lineage>
</organism>
<evidence type="ECO:0000250" key="1">
    <source>
        <dbReference type="UniProtKB" id="O01798"/>
    </source>
</evidence>
<evidence type="ECO:0000255" key="2">
    <source>
        <dbReference type="PROSITE-ProRule" id="PRU00159"/>
    </source>
</evidence>
<evidence type="ECO:0000255" key="3">
    <source>
        <dbReference type="PROSITE-ProRule" id="PRU00191"/>
    </source>
</evidence>
<evidence type="ECO:0000256" key="4">
    <source>
        <dbReference type="SAM" id="MobiDB-lite"/>
    </source>
</evidence>
<evidence type="ECO:0000269" key="5">
    <source>
    </source>
</evidence>
<evidence type="ECO:0000305" key="6"/>
<evidence type="ECO:0000312" key="7">
    <source>
        <dbReference type="EMBL" id="CAP25702.2"/>
    </source>
</evidence>
<evidence type="ECO:0000312" key="8">
    <source>
        <dbReference type="Proteomes" id="UP000008549"/>
    </source>
</evidence>
<evidence type="ECO:0000312" key="9">
    <source>
        <dbReference type="WormBase" id="CBG05099a"/>
    </source>
</evidence>
<reference evidence="8" key="1">
    <citation type="journal article" date="2003" name="PLoS Biol.">
        <title>The genome sequence of Caenorhabditis briggsae: a platform for comparative genomics.</title>
        <authorList>
            <person name="Stein L.D."/>
            <person name="Bao Z."/>
            <person name="Blasiar D."/>
            <person name="Blumenthal T."/>
            <person name="Brent M.R."/>
            <person name="Chen N."/>
            <person name="Chinwalla A."/>
            <person name="Clarke L."/>
            <person name="Clee C."/>
            <person name="Coghlan A."/>
            <person name="Coulson A."/>
            <person name="D'Eustachio P."/>
            <person name="Fitch D.H.A."/>
            <person name="Fulton L.A."/>
            <person name="Fulton R.E."/>
            <person name="Griffiths-Jones S."/>
            <person name="Harris T.W."/>
            <person name="Hillier L.W."/>
            <person name="Kamath R."/>
            <person name="Kuwabara P.E."/>
            <person name="Mardis E.R."/>
            <person name="Marra M.A."/>
            <person name="Miner T.L."/>
            <person name="Minx P."/>
            <person name="Mullikin J.C."/>
            <person name="Plumb R.W."/>
            <person name="Rogers J."/>
            <person name="Schein J.E."/>
            <person name="Sohrmann M."/>
            <person name="Spieth J."/>
            <person name="Stajich J.E."/>
            <person name="Wei C."/>
            <person name="Willey D."/>
            <person name="Wilson R.K."/>
            <person name="Durbin R.M."/>
            <person name="Waterston R.H."/>
        </authorList>
    </citation>
    <scope>NUCLEOTIDE SEQUENCE [LARGE SCALE GENOMIC DNA]</scope>
    <source>
        <strain evidence="7 8">AF16</strain>
    </source>
</reference>
<reference evidence="6" key="2">
    <citation type="journal article" date="2014" name="Nat. Commun.">
        <title>Co-option of alternate sperm activation programs in the evolution of self-fertile nematodes.</title>
        <authorList>
            <person name="Wei Q."/>
            <person name="Zhao Y."/>
            <person name="Guo Y."/>
            <person name="Stomel J."/>
            <person name="Stires R."/>
            <person name="Ellis R.E."/>
        </authorList>
    </citation>
    <scope>FUNCTION</scope>
    <scope>TISSUE SPECIFICITY</scope>
</reference>